<gene>
    <name evidence="1" type="primary">hflD</name>
    <name type="ordered locus">plu2805</name>
</gene>
<comment type="subcellular location">
    <subcellularLocation>
        <location>Cytoplasm</location>
    </subcellularLocation>
    <subcellularLocation>
        <location evidence="1">Cell inner membrane</location>
        <topology evidence="1">Peripheral membrane protein</topology>
        <orientation evidence="1">Cytoplasmic side</orientation>
    </subcellularLocation>
</comment>
<comment type="similarity">
    <text evidence="1">Belongs to the HflD family.</text>
</comment>
<proteinExistence type="inferred from homology"/>
<organism>
    <name type="scientific">Photorhabdus laumondii subsp. laumondii (strain DSM 15139 / CIP 105565 / TT01)</name>
    <name type="common">Photorhabdus luminescens subsp. laumondii</name>
    <dbReference type="NCBI Taxonomy" id="243265"/>
    <lineage>
        <taxon>Bacteria</taxon>
        <taxon>Pseudomonadati</taxon>
        <taxon>Pseudomonadota</taxon>
        <taxon>Gammaproteobacteria</taxon>
        <taxon>Enterobacterales</taxon>
        <taxon>Morganellaceae</taxon>
        <taxon>Photorhabdus</taxon>
    </lineage>
</organism>
<keyword id="KW-0997">Cell inner membrane</keyword>
<keyword id="KW-1003">Cell membrane</keyword>
<keyword id="KW-0963">Cytoplasm</keyword>
<keyword id="KW-0472">Membrane</keyword>
<keyword id="KW-1185">Reference proteome</keyword>
<accession>Q7N3B4</accession>
<protein>
    <recommendedName>
        <fullName evidence="1">High frequency lysogenization protein HflD homolog</fullName>
    </recommendedName>
</protein>
<dbReference type="EMBL" id="BX571868">
    <property type="protein sequence ID" value="CAE15179.1"/>
    <property type="molecule type" value="Genomic_DNA"/>
</dbReference>
<dbReference type="RefSeq" id="WP_011147025.1">
    <property type="nucleotide sequence ID" value="NC_005126.1"/>
</dbReference>
<dbReference type="SMR" id="Q7N3B4"/>
<dbReference type="STRING" id="243265.plu2805"/>
<dbReference type="GeneID" id="48849068"/>
<dbReference type="KEGG" id="plu:plu2805"/>
<dbReference type="eggNOG" id="COG2915">
    <property type="taxonomic scope" value="Bacteria"/>
</dbReference>
<dbReference type="HOGENOM" id="CLU_098920_0_0_6"/>
<dbReference type="OrthoDB" id="9788031at2"/>
<dbReference type="Proteomes" id="UP000002514">
    <property type="component" value="Chromosome"/>
</dbReference>
<dbReference type="GO" id="GO:0005737">
    <property type="term" value="C:cytoplasm"/>
    <property type="evidence" value="ECO:0007669"/>
    <property type="project" value="UniProtKB-SubCell"/>
</dbReference>
<dbReference type="GO" id="GO:0005886">
    <property type="term" value="C:plasma membrane"/>
    <property type="evidence" value="ECO:0007669"/>
    <property type="project" value="UniProtKB-SubCell"/>
</dbReference>
<dbReference type="Gene3D" id="1.10.3890.10">
    <property type="entry name" value="HflD-like"/>
    <property type="match status" value="1"/>
</dbReference>
<dbReference type="HAMAP" id="MF_00695">
    <property type="entry name" value="HflD_protein"/>
    <property type="match status" value="1"/>
</dbReference>
<dbReference type="InterPro" id="IPR007451">
    <property type="entry name" value="HflD"/>
</dbReference>
<dbReference type="InterPro" id="IPR035932">
    <property type="entry name" value="HflD-like_sf"/>
</dbReference>
<dbReference type="NCBIfam" id="NF001246">
    <property type="entry name" value="PRK00218.1-2"/>
    <property type="match status" value="1"/>
</dbReference>
<dbReference type="NCBIfam" id="NF001248">
    <property type="entry name" value="PRK00218.1-4"/>
    <property type="match status" value="1"/>
</dbReference>
<dbReference type="NCBIfam" id="NF001249">
    <property type="entry name" value="PRK00218.1-5"/>
    <property type="match status" value="1"/>
</dbReference>
<dbReference type="PANTHER" id="PTHR38100">
    <property type="entry name" value="HIGH FREQUENCY LYSOGENIZATION PROTEIN HFLD"/>
    <property type="match status" value="1"/>
</dbReference>
<dbReference type="PANTHER" id="PTHR38100:SF1">
    <property type="entry name" value="HIGH FREQUENCY LYSOGENIZATION PROTEIN HFLD"/>
    <property type="match status" value="1"/>
</dbReference>
<dbReference type="Pfam" id="PF04356">
    <property type="entry name" value="DUF489"/>
    <property type="match status" value="1"/>
</dbReference>
<dbReference type="SUPFAM" id="SSF101322">
    <property type="entry name" value="YcfC-like"/>
    <property type="match status" value="1"/>
</dbReference>
<sequence>MAKNHYNITLALAGICQSGRLVQQLSHENQCDTDAVTTMVNSILNTNPASVLDVFGNHERNLKIGLNAMLGMFNSSNNGISADLTRYILSLIALERRLMKNQAASDALGNRISLLERQQAYFEPMSEGMFNALAGIYVDVISPLGPRIQVTGSPDILRNPLVQAKVRAILLAGVRCAVLWQQVGGGRLQLMFSRQRLIQQAKDILSHC</sequence>
<name>HFLD_PHOLL</name>
<evidence type="ECO:0000255" key="1">
    <source>
        <dbReference type="HAMAP-Rule" id="MF_00695"/>
    </source>
</evidence>
<reference key="1">
    <citation type="journal article" date="2003" name="Nat. Biotechnol.">
        <title>The genome sequence of the entomopathogenic bacterium Photorhabdus luminescens.</title>
        <authorList>
            <person name="Duchaud E."/>
            <person name="Rusniok C."/>
            <person name="Frangeul L."/>
            <person name="Buchrieser C."/>
            <person name="Givaudan A."/>
            <person name="Taourit S."/>
            <person name="Bocs S."/>
            <person name="Boursaux-Eude C."/>
            <person name="Chandler M."/>
            <person name="Charles J.-F."/>
            <person name="Dassa E."/>
            <person name="Derose R."/>
            <person name="Derzelle S."/>
            <person name="Freyssinet G."/>
            <person name="Gaudriault S."/>
            <person name="Medigue C."/>
            <person name="Lanois A."/>
            <person name="Powell K."/>
            <person name="Siguier P."/>
            <person name="Vincent R."/>
            <person name="Wingate V."/>
            <person name="Zouine M."/>
            <person name="Glaser P."/>
            <person name="Boemare N."/>
            <person name="Danchin A."/>
            <person name="Kunst F."/>
        </authorList>
    </citation>
    <scope>NUCLEOTIDE SEQUENCE [LARGE SCALE GENOMIC DNA]</scope>
    <source>
        <strain>DSM 15139 / CIP 105565 / TT01</strain>
    </source>
</reference>
<feature type="chain" id="PRO_0000071582" description="High frequency lysogenization protein HflD homolog">
    <location>
        <begin position="1"/>
        <end position="208"/>
    </location>
</feature>